<comment type="function">
    <text>Inhibitor of trypsin and chymotrypsin.</text>
</comment>
<comment type="induction">
    <text>Not induced by wounding.</text>
</comment>
<comment type="similarity">
    <text evidence="3">Belongs to the protease inhibitor I20 (potato type II proteinase inhibitor) family.</text>
</comment>
<proteinExistence type="evidence at transcript level"/>
<reference key="1">
    <citation type="online journal article" date="1996" name="Plant Gene Register">
        <title>Isolation and characterization of a proteinase inhibitor II gene that is not wound-inducible.</title>
        <authorList>
            <person name="Park S."/>
            <person name="Thornburg R.W."/>
        </authorList>
        <locator>PGR96-007</locator>
    </citation>
    <scope>NUCLEOTIDE SEQUENCE [GENOMIC DNA]</scope>
    <source>
        <strain>cv. Russet Burbank-0</strain>
    </source>
</reference>
<feature type="signal peptide" evidence="2">
    <location>
        <begin position="1"/>
        <end position="25"/>
    </location>
</feature>
<feature type="chain" id="PRO_0000025315" description="Proteinase inhibitor type-2 T">
    <location>
        <begin position="26"/>
        <end position="147"/>
    </location>
</feature>
<feature type="repeat" description="1">
    <location>
        <begin position="25"/>
        <end position="82"/>
    </location>
</feature>
<feature type="repeat" description="2">
    <location>
        <begin position="83"/>
        <end position="142"/>
    </location>
</feature>
<feature type="site" description="Reactive bond for trypsin" evidence="3">
    <location>
        <begin position="30"/>
        <end position="31"/>
    </location>
</feature>
<feature type="site" description="Reactive bond for chymotrypsin" evidence="3">
    <location>
        <begin position="87"/>
        <end position="88"/>
    </location>
</feature>
<feature type="disulfide bond" evidence="1">
    <location>
        <begin position="28"/>
        <end position="116"/>
    </location>
</feature>
<feature type="disulfide bond" evidence="1">
    <location>
        <begin position="32"/>
        <end position="112"/>
    </location>
</feature>
<feature type="disulfide bond" evidence="1">
    <location>
        <begin position="40"/>
        <end position="122"/>
    </location>
</feature>
<feature type="disulfide bond" evidence="1">
    <location>
        <begin position="52"/>
        <end position="89"/>
    </location>
</feature>
<feature type="disulfide bond" evidence="1">
    <location>
        <begin position="55"/>
        <end position="73"/>
    </location>
</feature>
<feature type="disulfide bond" evidence="1">
    <location>
        <begin position="56"/>
        <end position="85"/>
    </location>
</feature>
<feature type="disulfide bond" evidence="1">
    <location>
        <begin position="62"/>
        <end position="98"/>
    </location>
</feature>
<feature type="disulfide bond" evidence="1">
    <location>
        <begin position="115"/>
        <end position="133"/>
    </location>
</feature>
<sequence>MAVHKEVSFVAYLLIVLGMFLYVDALGCTKECGNLGFGICPRSEGSPTNPICINCCSGYKGCNYYSAFGDLICQGESDPKNPKACPLNCDTNIAYSRCPRSEGKSLIYPTGCTTCCTGYKGCYYFGTNGKFVCEGESDEPKPYMSTA</sequence>
<evidence type="ECO:0000250" key="1"/>
<evidence type="ECO:0000255" key="2"/>
<evidence type="ECO:0000305" key="3"/>
<protein>
    <recommendedName>
        <fullName>Proteinase inhibitor type-2 T</fullName>
    </recommendedName>
    <alternativeName>
        <fullName>Proteinase inhibitor type II T</fullName>
    </alternativeName>
</protein>
<name>IP2T_SOLTU</name>
<keyword id="KW-1015">Disulfide bond</keyword>
<keyword id="KW-0646">Protease inhibitor</keyword>
<keyword id="KW-1185">Reference proteome</keyword>
<keyword id="KW-0677">Repeat</keyword>
<keyword id="KW-0722">Serine protease inhibitor</keyword>
<keyword id="KW-0732">Signal</keyword>
<accession>Q41435</accession>
<organism>
    <name type="scientific">Solanum tuberosum</name>
    <name type="common">Potato</name>
    <dbReference type="NCBI Taxonomy" id="4113"/>
    <lineage>
        <taxon>Eukaryota</taxon>
        <taxon>Viridiplantae</taxon>
        <taxon>Streptophyta</taxon>
        <taxon>Embryophyta</taxon>
        <taxon>Tracheophyta</taxon>
        <taxon>Spermatophyta</taxon>
        <taxon>Magnoliopsida</taxon>
        <taxon>eudicotyledons</taxon>
        <taxon>Gunneridae</taxon>
        <taxon>Pentapetalae</taxon>
        <taxon>asterids</taxon>
        <taxon>lamiids</taxon>
        <taxon>Solanales</taxon>
        <taxon>Solanaceae</taxon>
        <taxon>Solanoideae</taxon>
        <taxon>Solaneae</taxon>
        <taxon>Solanum</taxon>
    </lineage>
</organism>
<dbReference type="EMBL" id="U45450">
    <property type="protein sequence ID" value="AAD09849.1"/>
    <property type="molecule type" value="Genomic_DNA"/>
</dbReference>
<dbReference type="SMR" id="Q41435"/>
<dbReference type="MEROPS" id="I20.003"/>
<dbReference type="InParanoid" id="Q41435"/>
<dbReference type="Proteomes" id="UP000011115">
    <property type="component" value="Unassembled WGS sequence"/>
</dbReference>
<dbReference type="ExpressionAtlas" id="Q41435">
    <property type="expression patterns" value="baseline and differential"/>
</dbReference>
<dbReference type="GO" id="GO:0004867">
    <property type="term" value="F:serine-type endopeptidase inhibitor activity"/>
    <property type="evidence" value="ECO:0007669"/>
    <property type="project" value="UniProtKB-KW"/>
</dbReference>
<dbReference type="Gene3D" id="3.30.60.30">
    <property type="match status" value="2"/>
</dbReference>
<dbReference type="InterPro" id="IPR003465">
    <property type="entry name" value="Prot_inh_I20"/>
</dbReference>
<dbReference type="InterPro" id="IPR051391">
    <property type="entry name" value="Protease_inhibitor_I20"/>
</dbReference>
<dbReference type="PANTHER" id="PTHR33832">
    <property type="entry name" value="SERINE-TYPE ENDOPEPTIDASE INHIBITOR"/>
    <property type="match status" value="1"/>
</dbReference>
<dbReference type="PANTHER" id="PTHR33832:SF20">
    <property type="entry name" value="WOUND-INDUCED PROTEINASE INHIBITOR 2"/>
    <property type="match status" value="1"/>
</dbReference>
<dbReference type="Pfam" id="PF02428">
    <property type="entry name" value="Prot_inhib_II"/>
    <property type="match status" value="2"/>
</dbReference>
<dbReference type="SUPFAM" id="SSF100897">
    <property type="entry name" value="Plant proteinase inhibitors"/>
    <property type="match status" value="1"/>
</dbReference>
<gene>
    <name type="primary">PIN2T</name>
</gene>